<comment type="PTM">
    <text evidence="1">The N-terminus is cleaved by ribosomal processing cysteine protease Prp.</text>
</comment>
<comment type="similarity">
    <text evidence="2">Belongs to the bacterial ribosomal protein bL27 family.</text>
</comment>
<organism>
    <name type="scientific">Clostridium botulinum (strain ATCC 19397 / Type A)</name>
    <dbReference type="NCBI Taxonomy" id="441770"/>
    <lineage>
        <taxon>Bacteria</taxon>
        <taxon>Bacillati</taxon>
        <taxon>Bacillota</taxon>
        <taxon>Clostridia</taxon>
        <taxon>Eubacteriales</taxon>
        <taxon>Clostridiaceae</taxon>
        <taxon>Clostridium</taxon>
    </lineage>
</organism>
<evidence type="ECO:0000250" key="1">
    <source>
        <dbReference type="UniProtKB" id="Q2FXT0"/>
    </source>
</evidence>
<evidence type="ECO:0000255" key="2">
    <source>
        <dbReference type="HAMAP-Rule" id="MF_00539"/>
    </source>
</evidence>
<evidence type="ECO:0000305" key="3"/>
<name>RL27_CLOB1</name>
<protein>
    <recommendedName>
        <fullName evidence="2">Large ribosomal subunit protein bL27</fullName>
    </recommendedName>
    <alternativeName>
        <fullName evidence="3">50S ribosomal protein L27</fullName>
    </alternativeName>
</protein>
<keyword id="KW-0687">Ribonucleoprotein</keyword>
<keyword id="KW-0689">Ribosomal protein</keyword>
<sequence>MLVMNLQLFAHKKGVGSSKNGRDSEAKRLGVKCSDGQFVLAGNILVRQRGTKIHPGLNVGRGGDDTLFAKIDGVVKYERLGRDKKKASVYPVEVEEVVAE</sequence>
<proteinExistence type="inferred from homology"/>
<accession>A7FXU7</accession>
<gene>
    <name evidence="2" type="primary">rpmA</name>
    <name type="ordered locus">CLB_3012</name>
</gene>
<feature type="propeptide" id="PRO_0000459873" evidence="1">
    <location>
        <begin position="1"/>
        <end position="9"/>
    </location>
</feature>
<feature type="chain" id="PRO_1000017453" description="Large ribosomal subunit protein bL27">
    <location>
        <begin position="10"/>
        <end position="100"/>
    </location>
</feature>
<dbReference type="EMBL" id="CP000726">
    <property type="protein sequence ID" value="ABS32971.1"/>
    <property type="molecule type" value="Genomic_DNA"/>
</dbReference>
<dbReference type="RefSeq" id="WP_003357774.1">
    <property type="nucleotide sequence ID" value="NC_009697.1"/>
</dbReference>
<dbReference type="SMR" id="A7FXU7"/>
<dbReference type="GeneID" id="92939708"/>
<dbReference type="KEGG" id="cba:CLB_3012"/>
<dbReference type="HOGENOM" id="CLU_095424_4_0_9"/>
<dbReference type="GO" id="GO:0022625">
    <property type="term" value="C:cytosolic large ribosomal subunit"/>
    <property type="evidence" value="ECO:0007669"/>
    <property type="project" value="TreeGrafter"/>
</dbReference>
<dbReference type="GO" id="GO:0003735">
    <property type="term" value="F:structural constituent of ribosome"/>
    <property type="evidence" value="ECO:0007669"/>
    <property type="project" value="InterPro"/>
</dbReference>
<dbReference type="GO" id="GO:0006412">
    <property type="term" value="P:translation"/>
    <property type="evidence" value="ECO:0007669"/>
    <property type="project" value="UniProtKB-UniRule"/>
</dbReference>
<dbReference type="FunFam" id="2.40.50.100:FF:000004">
    <property type="entry name" value="50S ribosomal protein L27"/>
    <property type="match status" value="1"/>
</dbReference>
<dbReference type="Gene3D" id="2.40.50.100">
    <property type="match status" value="1"/>
</dbReference>
<dbReference type="HAMAP" id="MF_00539">
    <property type="entry name" value="Ribosomal_bL27"/>
    <property type="match status" value="1"/>
</dbReference>
<dbReference type="InterPro" id="IPR001684">
    <property type="entry name" value="Ribosomal_bL27"/>
</dbReference>
<dbReference type="InterPro" id="IPR018261">
    <property type="entry name" value="Ribosomal_bL27_CS"/>
</dbReference>
<dbReference type="NCBIfam" id="TIGR00062">
    <property type="entry name" value="L27"/>
    <property type="match status" value="1"/>
</dbReference>
<dbReference type="PANTHER" id="PTHR15893:SF0">
    <property type="entry name" value="LARGE RIBOSOMAL SUBUNIT PROTEIN BL27M"/>
    <property type="match status" value="1"/>
</dbReference>
<dbReference type="PANTHER" id="PTHR15893">
    <property type="entry name" value="RIBOSOMAL PROTEIN L27"/>
    <property type="match status" value="1"/>
</dbReference>
<dbReference type="Pfam" id="PF01016">
    <property type="entry name" value="Ribosomal_L27"/>
    <property type="match status" value="1"/>
</dbReference>
<dbReference type="PRINTS" id="PR00063">
    <property type="entry name" value="RIBOSOMALL27"/>
</dbReference>
<dbReference type="SUPFAM" id="SSF110324">
    <property type="entry name" value="Ribosomal L27 protein-like"/>
    <property type="match status" value="1"/>
</dbReference>
<dbReference type="PROSITE" id="PS00831">
    <property type="entry name" value="RIBOSOMAL_L27"/>
    <property type="match status" value="1"/>
</dbReference>
<reference key="1">
    <citation type="journal article" date="2007" name="PLoS ONE">
        <title>Analysis of the neurotoxin complex genes in Clostridium botulinum A1-A4 and B1 strains: BoNT/A3, /Ba4 and /B1 clusters are located within plasmids.</title>
        <authorList>
            <person name="Smith T.J."/>
            <person name="Hill K.K."/>
            <person name="Foley B.T."/>
            <person name="Detter J.C."/>
            <person name="Munk A.C."/>
            <person name="Bruce D.C."/>
            <person name="Doggett N.A."/>
            <person name="Smith L.A."/>
            <person name="Marks J.D."/>
            <person name="Xie G."/>
            <person name="Brettin T.S."/>
        </authorList>
    </citation>
    <scope>NUCLEOTIDE SEQUENCE [LARGE SCALE GENOMIC DNA]</scope>
    <source>
        <strain>ATCC 19397 / Type A</strain>
    </source>
</reference>